<gene>
    <name evidence="1" type="primary">gpmA</name>
    <name type="ordered locus">MW2339</name>
</gene>
<comment type="function">
    <text evidence="1">Catalyzes the interconversion of 2-phosphoglycerate and 3-phosphoglycerate.</text>
</comment>
<comment type="catalytic activity">
    <reaction evidence="1">
        <text>(2R)-2-phosphoglycerate = (2R)-3-phosphoglycerate</text>
        <dbReference type="Rhea" id="RHEA:15901"/>
        <dbReference type="ChEBI" id="CHEBI:58272"/>
        <dbReference type="ChEBI" id="CHEBI:58289"/>
        <dbReference type="EC" id="5.4.2.11"/>
    </reaction>
</comment>
<comment type="pathway">
    <text evidence="1">Carbohydrate degradation; glycolysis; pyruvate from D-glyceraldehyde 3-phosphate: step 3/5.</text>
</comment>
<comment type="similarity">
    <text evidence="1">Belongs to the phosphoglycerate mutase family. BPG-dependent PGAM subfamily.</text>
</comment>
<name>GPMA_STAAW</name>
<protein>
    <recommendedName>
        <fullName evidence="1">2,3-bisphosphoglycerate-dependent phosphoglycerate mutase</fullName>
        <shortName evidence="1">BPG-dependent PGAM</shortName>
        <shortName evidence="1">PGAM</shortName>
        <shortName evidence="1">Phosphoglyceromutase</shortName>
        <shortName evidence="1">dPGM</shortName>
        <ecNumber evidence="1">5.4.2.11</ecNumber>
    </recommendedName>
</protein>
<feature type="chain" id="PRO_0000179915" description="2,3-bisphosphoglycerate-dependent phosphoglycerate mutase">
    <location>
        <begin position="1"/>
        <end position="228"/>
    </location>
</feature>
<feature type="active site" description="Tele-phosphohistidine intermediate" evidence="1">
    <location>
        <position position="9"/>
    </location>
</feature>
<feature type="active site" description="Proton donor/acceptor" evidence="1">
    <location>
        <position position="87"/>
    </location>
</feature>
<feature type="binding site" evidence="1">
    <location>
        <begin position="8"/>
        <end position="15"/>
    </location>
    <ligand>
        <name>substrate</name>
    </ligand>
</feature>
<feature type="binding site" evidence="1">
    <location>
        <begin position="21"/>
        <end position="22"/>
    </location>
    <ligand>
        <name>substrate</name>
    </ligand>
</feature>
<feature type="binding site" evidence="1">
    <location>
        <position position="60"/>
    </location>
    <ligand>
        <name>substrate</name>
    </ligand>
</feature>
<feature type="binding site" evidence="1">
    <location>
        <begin position="87"/>
        <end position="90"/>
    </location>
    <ligand>
        <name>substrate</name>
    </ligand>
</feature>
<feature type="binding site" evidence="1">
    <location>
        <position position="98"/>
    </location>
    <ligand>
        <name>substrate</name>
    </ligand>
</feature>
<feature type="binding site" evidence="1">
    <location>
        <begin position="114"/>
        <end position="115"/>
    </location>
    <ligand>
        <name>substrate</name>
    </ligand>
</feature>
<feature type="binding site" evidence="1">
    <location>
        <begin position="183"/>
        <end position="184"/>
    </location>
    <ligand>
        <name>substrate</name>
    </ligand>
</feature>
<feature type="site" description="Transition state stabilizer" evidence="1">
    <location>
        <position position="182"/>
    </location>
</feature>
<dbReference type="EC" id="5.4.2.11" evidence="1"/>
<dbReference type="EMBL" id="BA000033">
    <property type="protein sequence ID" value="BAB96204.1"/>
    <property type="molecule type" value="Genomic_DNA"/>
</dbReference>
<dbReference type="RefSeq" id="WP_001125208.1">
    <property type="nucleotide sequence ID" value="NC_003923.1"/>
</dbReference>
<dbReference type="SMR" id="P65709"/>
<dbReference type="KEGG" id="sam:MW2339"/>
<dbReference type="HOGENOM" id="CLU_033323_1_5_9"/>
<dbReference type="UniPathway" id="UPA00109">
    <property type="reaction ID" value="UER00186"/>
</dbReference>
<dbReference type="GO" id="GO:0004619">
    <property type="term" value="F:phosphoglycerate mutase activity"/>
    <property type="evidence" value="ECO:0007669"/>
    <property type="project" value="UniProtKB-EC"/>
</dbReference>
<dbReference type="GO" id="GO:0006094">
    <property type="term" value="P:gluconeogenesis"/>
    <property type="evidence" value="ECO:0007669"/>
    <property type="project" value="UniProtKB-UniRule"/>
</dbReference>
<dbReference type="GO" id="GO:0006096">
    <property type="term" value="P:glycolytic process"/>
    <property type="evidence" value="ECO:0007669"/>
    <property type="project" value="UniProtKB-UniRule"/>
</dbReference>
<dbReference type="CDD" id="cd07067">
    <property type="entry name" value="HP_PGM_like"/>
    <property type="match status" value="1"/>
</dbReference>
<dbReference type="FunFam" id="3.40.50.1240:FF:000003">
    <property type="entry name" value="2,3-bisphosphoglycerate-dependent phosphoglycerate mutase"/>
    <property type="match status" value="1"/>
</dbReference>
<dbReference type="Gene3D" id="3.40.50.1240">
    <property type="entry name" value="Phosphoglycerate mutase-like"/>
    <property type="match status" value="1"/>
</dbReference>
<dbReference type="HAMAP" id="MF_01039">
    <property type="entry name" value="PGAM_GpmA"/>
    <property type="match status" value="1"/>
</dbReference>
<dbReference type="InterPro" id="IPR013078">
    <property type="entry name" value="His_Pase_superF_clade-1"/>
</dbReference>
<dbReference type="InterPro" id="IPR029033">
    <property type="entry name" value="His_PPase_superfam"/>
</dbReference>
<dbReference type="InterPro" id="IPR001345">
    <property type="entry name" value="PG/BPGM_mutase_AS"/>
</dbReference>
<dbReference type="InterPro" id="IPR005952">
    <property type="entry name" value="Phosphogly_mut1"/>
</dbReference>
<dbReference type="NCBIfam" id="TIGR01258">
    <property type="entry name" value="pgm_1"/>
    <property type="match status" value="1"/>
</dbReference>
<dbReference type="NCBIfam" id="NF010713">
    <property type="entry name" value="PRK14115.1"/>
    <property type="match status" value="1"/>
</dbReference>
<dbReference type="NCBIfam" id="NF010717">
    <property type="entry name" value="PRK14119.1"/>
    <property type="match status" value="1"/>
</dbReference>
<dbReference type="PANTHER" id="PTHR11931">
    <property type="entry name" value="PHOSPHOGLYCERATE MUTASE"/>
    <property type="match status" value="1"/>
</dbReference>
<dbReference type="Pfam" id="PF00300">
    <property type="entry name" value="His_Phos_1"/>
    <property type="match status" value="1"/>
</dbReference>
<dbReference type="PIRSF" id="PIRSF000709">
    <property type="entry name" value="6PFK_2-Ptase"/>
    <property type="match status" value="1"/>
</dbReference>
<dbReference type="SMART" id="SM00855">
    <property type="entry name" value="PGAM"/>
    <property type="match status" value="1"/>
</dbReference>
<dbReference type="SUPFAM" id="SSF53254">
    <property type="entry name" value="Phosphoglycerate mutase-like"/>
    <property type="match status" value="1"/>
</dbReference>
<dbReference type="PROSITE" id="PS00175">
    <property type="entry name" value="PG_MUTASE"/>
    <property type="match status" value="1"/>
</dbReference>
<organism>
    <name type="scientific">Staphylococcus aureus (strain MW2)</name>
    <dbReference type="NCBI Taxonomy" id="196620"/>
    <lineage>
        <taxon>Bacteria</taxon>
        <taxon>Bacillati</taxon>
        <taxon>Bacillota</taxon>
        <taxon>Bacilli</taxon>
        <taxon>Bacillales</taxon>
        <taxon>Staphylococcaceae</taxon>
        <taxon>Staphylococcus</taxon>
    </lineage>
</organism>
<proteinExistence type="inferred from homology"/>
<reference key="1">
    <citation type="journal article" date="2002" name="Lancet">
        <title>Genome and virulence determinants of high virulence community-acquired MRSA.</title>
        <authorList>
            <person name="Baba T."/>
            <person name="Takeuchi F."/>
            <person name="Kuroda M."/>
            <person name="Yuzawa H."/>
            <person name="Aoki K."/>
            <person name="Oguchi A."/>
            <person name="Nagai Y."/>
            <person name="Iwama N."/>
            <person name="Asano K."/>
            <person name="Naimi T."/>
            <person name="Kuroda H."/>
            <person name="Cui L."/>
            <person name="Yamamoto K."/>
            <person name="Hiramatsu K."/>
        </authorList>
    </citation>
    <scope>NUCLEOTIDE SEQUENCE [LARGE SCALE GENOMIC DNA]</scope>
    <source>
        <strain>MW2</strain>
    </source>
</reference>
<sequence length="228" mass="26680">MPKLILCRHGQSEWNAKNLFTGWEDVNLSEQGINEATRAGEKVRENNIAIDVAFTSLLTRALDTTHYILTESKQQWIPVYKSWRLNERHYGGLQGLNKDDARKEFGEEQVHIWRRSYDVKPPAETEEQREAYLADRRYNHLDKRMMPYSESLKDTLVRVIPFWTDHISQYLLDGQTVLVSAHGNSIRALIKYLEDVSDEDIINYEIKTGAPLVYELTDDLEVIDKYYL</sequence>
<accession>P65709</accession>
<accession>Q99RL4</accession>
<keyword id="KW-0312">Gluconeogenesis</keyword>
<keyword id="KW-0324">Glycolysis</keyword>
<keyword id="KW-0413">Isomerase</keyword>
<evidence type="ECO:0000255" key="1">
    <source>
        <dbReference type="HAMAP-Rule" id="MF_01039"/>
    </source>
</evidence>